<protein>
    <recommendedName>
        <fullName evidence="2">Transaldolase</fullName>
        <ecNumber evidence="2">2.2.1.2</ecNumber>
    </recommendedName>
</protein>
<accession>Q326L3</accession>
<organism>
    <name type="scientific">Shigella boydii serotype 4 (strain Sb227)</name>
    <dbReference type="NCBI Taxonomy" id="300268"/>
    <lineage>
        <taxon>Bacteria</taxon>
        <taxon>Pseudomonadati</taxon>
        <taxon>Pseudomonadota</taxon>
        <taxon>Gammaproteobacteria</taxon>
        <taxon>Enterobacterales</taxon>
        <taxon>Enterobacteriaceae</taxon>
        <taxon>Shigella</taxon>
    </lineage>
</organism>
<sequence>MTDKLTSLRQYTTVVADTGDIAAMKLYQPQDATTNPSLILNAAQIPEYRKLIDDAVAWAKQQSNDRAQQIVDATDKLAVNIGLEILKLVPGRISTEVDARLSYDTEASIAKAKRLIKLYNDAGISNDRILIKLASTWQGIRAAEQLEKEGINCNLTLLFSFAQARACAEAGVFLISPFVGRILDWYKANTDKKEYAPAEDPGVVSVSEIYQYYKEHGYETVVMGASFRNIGEILELAGCDRLTIAPTLLKELAESEGAIERKLSYTGEVKARPARITESEFLWQHNQDPMAVDKLAEGIRKFAIDQEKLEKMIGDLL</sequence>
<gene>
    <name evidence="2" type="primary">tal</name>
    <name type="ordered locus">SBO_0009</name>
</gene>
<feature type="chain" id="PRO_0000230971" description="Transaldolase">
    <location>
        <begin position="1"/>
        <end position="317"/>
    </location>
</feature>
<feature type="active site" description="Schiff-base intermediate with substrate" evidence="2">
    <location>
        <position position="132"/>
    </location>
</feature>
<keyword id="KW-0963">Cytoplasm</keyword>
<keyword id="KW-0570">Pentose shunt</keyword>
<keyword id="KW-0704">Schiff base</keyword>
<keyword id="KW-0808">Transferase</keyword>
<evidence type="ECO:0000250" key="1"/>
<evidence type="ECO:0000255" key="2">
    <source>
        <dbReference type="HAMAP-Rule" id="MF_00492"/>
    </source>
</evidence>
<proteinExistence type="inferred from homology"/>
<dbReference type="EC" id="2.2.1.2" evidence="2"/>
<dbReference type="EMBL" id="CP000036">
    <property type="protein sequence ID" value="ABB64745.1"/>
    <property type="molecule type" value="Genomic_DNA"/>
</dbReference>
<dbReference type="RefSeq" id="WP_000130189.1">
    <property type="nucleotide sequence ID" value="NC_007613.1"/>
</dbReference>
<dbReference type="SMR" id="Q326L3"/>
<dbReference type="KEGG" id="sbo:SBO_0009"/>
<dbReference type="HOGENOM" id="CLU_047470_0_1_6"/>
<dbReference type="UniPathway" id="UPA00115">
    <property type="reaction ID" value="UER00414"/>
</dbReference>
<dbReference type="Proteomes" id="UP000007067">
    <property type="component" value="Chromosome"/>
</dbReference>
<dbReference type="GO" id="GO:0005829">
    <property type="term" value="C:cytosol"/>
    <property type="evidence" value="ECO:0007669"/>
    <property type="project" value="TreeGrafter"/>
</dbReference>
<dbReference type="GO" id="GO:0004801">
    <property type="term" value="F:transaldolase activity"/>
    <property type="evidence" value="ECO:0000250"/>
    <property type="project" value="UniProtKB"/>
</dbReference>
<dbReference type="GO" id="GO:0005975">
    <property type="term" value="P:carbohydrate metabolic process"/>
    <property type="evidence" value="ECO:0007669"/>
    <property type="project" value="InterPro"/>
</dbReference>
<dbReference type="GO" id="GO:0006098">
    <property type="term" value="P:pentose-phosphate shunt"/>
    <property type="evidence" value="ECO:0007669"/>
    <property type="project" value="UniProtKB-UniRule"/>
</dbReference>
<dbReference type="CDD" id="cd00957">
    <property type="entry name" value="Transaldolase_TalAB"/>
    <property type="match status" value="1"/>
</dbReference>
<dbReference type="FunFam" id="3.20.20.70:FF:000002">
    <property type="entry name" value="Transaldolase"/>
    <property type="match status" value="1"/>
</dbReference>
<dbReference type="Gene3D" id="3.20.20.70">
    <property type="entry name" value="Aldolase class I"/>
    <property type="match status" value="1"/>
</dbReference>
<dbReference type="HAMAP" id="MF_00492">
    <property type="entry name" value="Transaldolase_1"/>
    <property type="match status" value="1"/>
</dbReference>
<dbReference type="InterPro" id="IPR013785">
    <property type="entry name" value="Aldolase_TIM"/>
</dbReference>
<dbReference type="InterPro" id="IPR001585">
    <property type="entry name" value="TAL/FSA"/>
</dbReference>
<dbReference type="InterPro" id="IPR004730">
    <property type="entry name" value="Transaldolase_1"/>
</dbReference>
<dbReference type="InterPro" id="IPR018225">
    <property type="entry name" value="Transaldolase_AS"/>
</dbReference>
<dbReference type="NCBIfam" id="NF009001">
    <property type="entry name" value="PRK12346.1"/>
    <property type="match status" value="1"/>
</dbReference>
<dbReference type="NCBIfam" id="TIGR00874">
    <property type="entry name" value="talAB"/>
    <property type="match status" value="1"/>
</dbReference>
<dbReference type="PANTHER" id="PTHR10683">
    <property type="entry name" value="TRANSALDOLASE"/>
    <property type="match status" value="1"/>
</dbReference>
<dbReference type="PANTHER" id="PTHR10683:SF18">
    <property type="entry name" value="TRANSALDOLASE"/>
    <property type="match status" value="1"/>
</dbReference>
<dbReference type="Pfam" id="PF00923">
    <property type="entry name" value="TAL_FSA"/>
    <property type="match status" value="1"/>
</dbReference>
<dbReference type="SUPFAM" id="SSF51569">
    <property type="entry name" value="Aldolase"/>
    <property type="match status" value="1"/>
</dbReference>
<dbReference type="PROSITE" id="PS01054">
    <property type="entry name" value="TRANSALDOLASE_1"/>
    <property type="match status" value="1"/>
</dbReference>
<dbReference type="PROSITE" id="PS00958">
    <property type="entry name" value="TRANSALDOLASE_2"/>
    <property type="match status" value="1"/>
</dbReference>
<comment type="function">
    <text evidence="2">Transaldolase is important for the balance of metabolites in the pentose-phosphate pathway.</text>
</comment>
<comment type="catalytic activity">
    <reaction evidence="2">
        <text>D-sedoheptulose 7-phosphate + D-glyceraldehyde 3-phosphate = D-erythrose 4-phosphate + beta-D-fructose 6-phosphate</text>
        <dbReference type="Rhea" id="RHEA:17053"/>
        <dbReference type="ChEBI" id="CHEBI:16897"/>
        <dbReference type="ChEBI" id="CHEBI:57483"/>
        <dbReference type="ChEBI" id="CHEBI:57634"/>
        <dbReference type="ChEBI" id="CHEBI:59776"/>
        <dbReference type="EC" id="2.2.1.2"/>
    </reaction>
</comment>
<comment type="pathway">
    <text evidence="2">Carbohydrate degradation; pentose phosphate pathway; D-glyceraldehyde 3-phosphate and beta-D-fructose 6-phosphate from D-ribose 5-phosphate and D-xylulose 5-phosphate (non-oxidative stage): step 2/3.</text>
</comment>
<comment type="subunit">
    <text evidence="1">Homodimer.</text>
</comment>
<comment type="subcellular location">
    <subcellularLocation>
        <location evidence="2">Cytoplasm</location>
    </subcellularLocation>
</comment>
<comment type="similarity">
    <text evidence="2">Belongs to the transaldolase family. Type 1 subfamily.</text>
</comment>
<name>TAL_SHIBS</name>
<reference key="1">
    <citation type="journal article" date="2005" name="Nucleic Acids Res.">
        <title>Genome dynamics and diversity of Shigella species, the etiologic agents of bacillary dysentery.</title>
        <authorList>
            <person name="Yang F."/>
            <person name="Yang J."/>
            <person name="Zhang X."/>
            <person name="Chen L."/>
            <person name="Jiang Y."/>
            <person name="Yan Y."/>
            <person name="Tang X."/>
            <person name="Wang J."/>
            <person name="Xiong Z."/>
            <person name="Dong J."/>
            <person name="Xue Y."/>
            <person name="Zhu Y."/>
            <person name="Xu X."/>
            <person name="Sun L."/>
            <person name="Chen S."/>
            <person name="Nie H."/>
            <person name="Peng J."/>
            <person name="Xu J."/>
            <person name="Wang Y."/>
            <person name="Yuan Z."/>
            <person name="Wen Y."/>
            <person name="Yao Z."/>
            <person name="Shen Y."/>
            <person name="Qiang B."/>
            <person name="Hou Y."/>
            <person name="Yu J."/>
            <person name="Jin Q."/>
        </authorList>
    </citation>
    <scope>NUCLEOTIDE SEQUENCE [LARGE SCALE GENOMIC DNA]</scope>
    <source>
        <strain>Sb227</strain>
    </source>
</reference>